<reference key="1">
    <citation type="journal article" date="2001" name="J. Bacteriol.">
        <title>Genome sequence and comparative analysis of the solvent-producing bacterium Clostridium acetobutylicum.</title>
        <authorList>
            <person name="Noelling J."/>
            <person name="Breton G."/>
            <person name="Omelchenko M.V."/>
            <person name="Makarova K.S."/>
            <person name="Zeng Q."/>
            <person name="Gibson R."/>
            <person name="Lee H.M."/>
            <person name="Dubois J."/>
            <person name="Qiu D."/>
            <person name="Hitti J."/>
            <person name="Wolf Y.I."/>
            <person name="Tatusov R.L."/>
            <person name="Sabathe F."/>
            <person name="Doucette-Stamm L.A."/>
            <person name="Soucaille P."/>
            <person name="Daly M.J."/>
            <person name="Bennett G.N."/>
            <person name="Koonin E.V."/>
            <person name="Smith D.R."/>
        </authorList>
    </citation>
    <scope>NUCLEOTIDE SEQUENCE [LARGE SCALE GENOMIC DNA]</scope>
    <source>
        <strain>ATCC 824 / DSM 792 / JCM 1419 / IAM 19013 / LMG 5710 / NBRC 13948 / NRRL B-527 / VKM B-1787 / 2291 / W</strain>
    </source>
</reference>
<accession>Q97N32</accession>
<protein>
    <recommendedName>
        <fullName evidence="1">DNA replication and repair protein RecF</fullName>
    </recommendedName>
</protein>
<proteinExistence type="inferred from homology"/>
<evidence type="ECO:0000255" key="1">
    <source>
        <dbReference type="HAMAP-Rule" id="MF_00365"/>
    </source>
</evidence>
<feature type="chain" id="PRO_0000196406" description="DNA replication and repair protein RecF">
    <location>
        <begin position="1"/>
        <end position="363"/>
    </location>
</feature>
<feature type="binding site" evidence="1">
    <location>
        <begin position="30"/>
        <end position="37"/>
    </location>
    <ligand>
        <name>ATP</name>
        <dbReference type="ChEBI" id="CHEBI:30616"/>
    </ligand>
</feature>
<sequence>MYIKNLYLDNFRNYDNIEIDFNKKVNILTGNNAQGKTNILESIFYCSLGKSHRTNKDKELIKWDKDEAFIRLNLSRKPLDKKIEIKIFKGGKKGININSIKLKKISELFGIFNVVMFSPEDLKIVKESPGHRRKFLDMEISKLDHRYYYKLVQYNKILDQRNIMLRNKKFLNNDMISVYDEQLSKFGSSLIESRIKYLNKLNEKGKIIHSDITKGKEEIEFTYLTHVKGRENISEELFSLFKDSYKRDVEKGNTSVGPHRDDFSIKINGIDARSFGSQGQQRTSVLTIKFASIQIIKEISSETPVLLLDDVLSELDESRQEYILNSLEGIQTLITCTGIGDIEKYLKNDFNVFRIDNGRIAEY</sequence>
<organism>
    <name type="scientific">Clostridium acetobutylicum (strain ATCC 824 / DSM 792 / JCM 1419 / IAM 19013 / LMG 5710 / NBRC 13948 / NRRL B-527 / VKM B-1787 / 2291 / W)</name>
    <dbReference type="NCBI Taxonomy" id="272562"/>
    <lineage>
        <taxon>Bacteria</taxon>
        <taxon>Bacillati</taxon>
        <taxon>Bacillota</taxon>
        <taxon>Clostridia</taxon>
        <taxon>Eubacteriales</taxon>
        <taxon>Clostridiaceae</taxon>
        <taxon>Clostridium</taxon>
    </lineage>
</organism>
<dbReference type="EMBL" id="AE001437">
    <property type="protein sequence ID" value="AAK77991.1"/>
    <property type="molecule type" value="Genomic_DNA"/>
</dbReference>
<dbReference type="PIR" id="D96900">
    <property type="entry name" value="D96900"/>
</dbReference>
<dbReference type="RefSeq" id="NP_346651.1">
    <property type="nucleotide sequence ID" value="NC_003030.1"/>
</dbReference>
<dbReference type="RefSeq" id="WP_010963333.1">
    <property type="nucleotide sequence ID" value="NC_003030.1"/>
</dbReference>
<dbReference type="SMR" id="Q97N32"/>
<dbReference type="STRING" id="272562.CA_C0004"/>
<dbReference type="GeneID" id="44996477"/>
<dbReference type="KEGG" id="cac:CA_C0004"/>
<dbReference type="PATRIC" id="fig|272562.8.peg.183"/>
<dbReference type="eggNOG" id="COG1195">
    <property type="taxonomic scope" value="Bacteria"/>
</dbReference>
<dbReference type="HOGENOM" id="CLU_040267_0_1_9"/>
<dbReference type="OrthoDB" id="9803889at2"/>
<dbReference type="Proteomes" id="UP000000814">
    <property type="component" value="Chromosome"/>
</dbReference>
<dbReference type="GO" id="GO:0005737">
    <property type="term" value="C:cytoplasm"/>
    <property type="evidence" value="ECO:0007669"/>
    <property type="project" value="UniProtKB-SubCell"/>
</dbReference>
<dbReference type="GO" id="GO:0005524">
    <property type="term" value="F:ATP binding"/>
    <property type="evidence" value="ECO:0007669"/>
    <property type="project" value="UniProtKB-UniRule"/>
</dbReference>
<dbReference type="GO" id="GO:0003697">
    <property type="term" value="F:single-stranded DNA binding"/>
    <property type="evidence" value="ECO:0007669"/>
    <property type="project" value="UniProtKB-UniRule"/>
</dbReference>
<dbReference type="GO" id="GO:0006260">
    <property type="term" value="P:DNA replication"/>
    <property type="evidence" value="ECO:0007669"/>
    <property type="project" value="UniProtKB-UniRule"/>
</dbReference>
<dbReference type="GO" id="GO:0000731">
    <property type="term" value="P:DNA synthesis involved in DNA repair"/>
    <property type="evidence" value="ECO:0007669"/>
    <property type="project" value="TreeGrafter"/>
</dbReference>
<dbReference type="GO" id="GO:0006302">
    <property type="term" value="P:double-strand break repair"/>
    <property type="evidence" value="ECO:0007669"/>
    <property type="project" value="TreeGrafter"/>
</dbReference>
<dbReference type="GO" id="GO:0009432">
    <property type="term" value="P:SOS response"/>
    <property type="evidence" value="ECO:0007669"/>
    <property type="project" value="UniProtKB-UniRule"/>
</dbReference>
<dbReference type="CDD" id="cd03242">
    <property type="entry name" value="ABC_RecF"/>
    <property type="match status" value="1"/>
</dbReference>
<dbReference type="Gene3D" id="3.40.50.300">
    <property type="entry name" value="P-loop containing nucleotide triphosphate hydrolases"/>
    <property type="match status" value="1"/>
</dbReference>
<dbReference type="Gene3D" id="1.20.1050.90">
    <property type="entry name" value="RecF/RecN/SMC, N-terminal domain"/>
    <property type="match status" value="1"/>
</dbReference>
<dbReference type="HAMAP" id="MF_00365">
    <property type="entry name" value="RecF"/>
    <property type="match status" value="1"/>
</dbReference>
<dbReference type="InterPro" id="IPR001238">
    <property type="entry name" value="DNA-binding_RecF"/>
</dbReference>
<dbReference type="InterPro" id="IPR018078">
    <property type="entry name" value="DNA-binding_RecF_CS"/>
</dbReference>
<dbReference type="InterPro" id="IPR027417">
    <property type="entry name" value="P-loop_NTPase"/>
</dbReference>
<dbReference type="InterPro" id="IPR003395">
    <property type="entry name" value="RecF/RecN/SMC_N"/>
</dbReference>
<dbReference type="InterPro" id="IPR042174">
    <property type="entry name" value="RecF_2"/>
</dbReference>
<dbReference type="NCBIfam" id="TIGR00611">
    <property type="entry name" value="recf"/>
    <property type="match status" value="1"/>
</dbReference>
<dbReference type="PANTHER" id="PTHR32182">
    <property type="entry name" value="DNA REPLICATION AND REPAIR PROTEIN RECF"/>
    <property type="match status" value="1"/>
</dbReference>
<dbReference type="PANTHER" id="PTHR32182:SF0">
    <property type="entry name" value="DNA REPLICATION AND REPAIR PROTEIN RECF"/>
    <property type="match status" value="1"/>
</dbReference>
<dbReference type="Pfam" id="PF02463">
    <property type="entry name" value="SMC_N"/>
    <property type="match status" value="1"/>
</dbReference>
<dbReference type="SUPFAM" id="SSF52540">
    <property type="entry name" value="P-loop containing nucleoside triphosphate hydrolases"/>
    <property type="match status" value="1"/>
</dbReference>
<dbReference type="PROSITE" id="PS00617">
    <property type="entry name" value="RECF_1"/>
    <property type="match status" value="1"/>
</dbReference>
<dbReference type="PROSITE" id="PS00618">
    <property type="entry name" value="RECF_2"/>
    <property type="match status" value="1"/>
</dbReference>
<keyword id="KW-0067">ATP-binding</keyword>
<keyword id="KW-0963">Cytoplasm</keyword>
<keyword id="KW-0227">DNA damage</keyword>
<keyword id="KW-0234">DNA repair</keyword>
<keyword id="KW-0235">DNA replication</keyword>
<keyword id="KW-0238">DNA-binding</keyword>
<keyword id="KW-0547">Nucleotide-binding</keyword>
<keyword id="KW-1185">Reference proteome</keyword>
<keyword id="KW-0742">SOS response</keyword>
<name>RECF_CLOAB</name>
<comment type="function">
    <text evidence="1">The RecF protein is involved in DNA metabolism; it is required for DNA replication and normal SOS inducibility. RecF binds preferentially to single-stranded, linear DNA. It also seems to bind ATP.</text>
</comment>
<comment type="subcellular location">
    <subcellularLocation>
        <location evidence="1">Cytoplasm</location>
    </subcellularLocation>
</comment>
<comment type="similarity">
    <text evidence="1">Belongs to the RecF family.</text>
</comment>
<gene>
    <name evidence="1" type="primary">recF</name>
    <name type="ordered locus">CA_C0004</name>
</gene>